<keyword id="KW-0687">Ribonucleoprotein</keyword>
<keyword id="KW-0689">Ribosomal protein</keyword>
<keyword id="KW-0694">RNA-binding</keyword>
<keyword id="KW-0699">rRNA-binding</keyword>
<organism>
    <name type="scientific">Cereibacter sphaeroides (strain ATCC 17029 / ATH 2.4.9)</name>
    <name type="common">Rhodobacter sphaeroides</name>
    <dbReference type="NCBI Taxonomy" id="349101"/>
    <lineage>
        <taxon>Bacteria</taxon>
        <taxon>Pseudomonadati</taxon>
        <taxon>Pseudomonadota</taxon>
        <taxon>Alphaproteobacteria</taxon>
        <taxon>Rhodobacterales</taxon>
        <taxon>Paracoccaceae</taxon>
        <taxon>Cereibacter</taxon>
    </lineage>
</organism>
<evidence type="ECO:0000255" key="1">
    <source>
        <dbReference type="HAMAP-Rule" id="MF_01337"/>
    </source>
</evidence>
<evidence type="ECO:0000305" key="2"/>
<dbReference type="EMBL" id="CP000577">
    <property type="protein sequence ID" value="ABN75493.1"/>
    <property type="molecule type" value="Genomic_DNA"/>
</dbReference>
<dbReference type="RefSeq" id="WP_002722520.1">
    <property type="nucleotide sequence ID" value="NC_009049.1"/>
</dbReference>
<dbReference type="SMR" id="A3PGM7"/>
<dbReference type="GeneID" id="67445516"/>
<dbReference type="KEGG" id="rsh:Rsph17029_0377"/>
<dbReference type="HOGENOM" id="CLU_098841_0_1_5"/>
<dbReference type="GO" id="GO:0022625">
    <property type="term" value="C:cytosolic large ribosomal subunit"/>
    <property type="evidence" value="ECO:0007669"/>
    <property type="project" value="TreeGrafter"/>
</dbReference>
<dbReference type="GO" id="GO:0008097">
    <property type="term" value="F:5S rRNA binding"/>
    <property type="evidence" value="ECO:0007669"/>
    <property type="project" value="TreeGrafter"/>
</dbReference>
<dbReference type="GO" id="GO:0003735">
    <property type="term" value="F:structural constituent of ribosome"/>
    <property type="evidence" value="ECO:0007669"/>
    <property type="project" value="InterPro"/>
</dbReference>
<dbReference type="GO" id="GO:0006412">
    <property type="term" value="P:translation"/>
    <property type="evidence" value="ECO:0007669"/>
    <property type="project" value="UniProtKB-UniRule"/>
</dbReference>
<dbReference type="CDD" id="cd00432">
    <property type="entry name" value="Ribosomal_L18_L5e"/>
    <property type="match status" value="1"/>
</dbReference>
<dbReference type="FunFam" id="3.30.420.100:FF:000001">
    <property type="entry name" value="50S ribosomal protein L18"/>
    <property type="match status" value="1"/>
</dbReference>
<dbReference type="Gene3D" id="3.30.420.100">
    <property type="match status" value="1"/>
</dbReference>
<dbReference type="HAMAP" id="MF_01337_B">
    <property type="entry name" value="Ribosomal_uL18_B"/>
    <property type="match status" value="1"/>
</dbReference>
<dbReference type="InterPro" id="IPR004389">
    <property type="entry name" value="Ribosomal_uL18_bac-type"/>
</dbReference>
<dbReference type="InterPro" id="IPR005484">
    <property type="entry name" value="Ribosomal_uL18_bac/euk"/>
</dbReference>
<dbReference type="NCBIfam" id="TIGR00060">
    <property type="entry name" value="L18_bact"/>
    <property type="match status" value="1"/>
</dbReference>
<dbReference type="PANTHER" id="PTHR12899">
    <property type="entry name" value="39S RIBOSOMAL PROTEIN L18, MITOCHONDRIAL"/>
    <property type="match status" value="1"/>
</dbReference>
<dbReference type="PANTHER" id="PTHR12899:SF3">
    <property type="entry name" value="LARGE RIBOSOMAL SUBUNIT PROTEIN UL18M"/>
    <property type="match status" value="1"/>
</dbReference>
<dbReference type="Pfam" id="PF00861">
    <property type="entry name" value="Ribosomal_L18p"/>
    <property type="match status" value="1"/>
</dbReference>
<dbReference type="SUPFAM" id="SSF53137">
    <property type="entry name" value="Translational machinery components"/>
    <property type="match status" value="1"/>
</dbReference>
<feature type="chain" id="PRO_1000053096" description="Large ribosomal subunit protein uL18">
    <location>
        <begin position="1"/>
        <end position="119"/>
    </location>
</feature>
<name>RL18_CERS1</name>
<comment type="function">
    <text evidence="1">This is one of the proteins that bind and probably mediate the attachment of the 5S RNA into the large ribosomal subunit, where it forms part of the central protuberance.</text>
</comment>
<comment type="subunit">
    <text evidence="1">Part of the 50S ribosomal subunit; part of the 5S rRNA/L5/L18/L25 subcomplex. Contacts the 5S and 23S rRNAs.</text>
</comment>
<comment type="similarity">
    <text evidence="1">Belongs to the universal ribosomal protein uL18 family.</text>
</comment>
<reference key="1">
    <citation type="submission" date="2007-02" db="EMBL/GenBank/DDBJ databases">
        <title>Complete sequence of chromosome 1 of Rhodobacter sphaeroides ATCC 17029.</title>
        <authorList>
            <person name="Copeland A."/>
            <person name="Lucas S."/>
            <person name="Lapidus A."/>
            <person name="Barry K."/>
            <person name="Detter J.C."/>
            <person name="Glavina del Rio T."/>
            <person name="Hammon N."/>
            <person name="Israni S."/>
            <person name="Dalin E."/>
            <person name="Tice H."/>
            <person name="Pitluck S."/>
            <person name="Kiss H."/>
            <person name="Brettin T."/>
            <person name="Bruce D."/>
            <person name="Han C."/>
            <person name="Tapia R."/>
            <person name="Gilna P."/>
            <person name="Schmutz J."/>
            <person name="Larimer F."/>
            <person name="Land M."/>
            <person name="Hauser L."/>
            <person name="Kyrpides N."/>
            <person name="Mikhailova N."/>
            <person name="Richardson P."/>
            <person name="Mackenzie C."/>
            <person name="Choudhary M."/>
            <person name="Donohue T.J."/>
            <person name="Kaplan S."/>
        </authorList>
    </citation>
    <scope>NUCLEOTIDE SEQUENCE [LARGE SCALE GENOMIC DNA]</scope>
    <source>
        <strain>ATCC 17029 / ATH 2.4.9</strain>
    </source>
</reference>
<protein>
    <recommendedName>
        <fullName evidence="1">Large ribosomal subunit protein uL18</fullName>
    </recommendedName>
    <alternativeName>
        <fullName evidence="2">50S ribosomal protein L18</fullName>
    </alternativeName>
</protein>
<accession>A3PGM7</accession>
<proteinExistence type="inferred from homology"/>
<gene>
    <name evidence="1" type="primary">rplR</name>
    <name type="ordered locus">Rsph17029_0377</name>
</gene>
<sequence>MANTKRELFLKRRLRVRNKLKASANGRLRLSVHRSSKNISAQLIDDANGVTLAAASTLEKGLGFVGKNNVEASAAVGRAIAERAKAAGIEECFFDRGGFLFHGKIKALADAAREGGLKF</sequence>